<name>MNMA_PARM1</name>
<reference key="1">
    <citation type="journal article" date="2005" name="DNA Res.">
        <title>Complete genome sequence of the facultative anaerobic magnetotactic bacterium Magnetospirillum sp. strain AMB-1.</title>
        <authorList>
            <person name="Matsunaga T."/>
            <person name="Okamura Y."/>
            <person name="Fukuda Y."/>
            <person name="Wahyudi A.T."/>
            <person name="Murase Y."/>
            <person name="Takeyama H."/>
        </authorList>
    </citation>
    <scope>NUCLEOTIDE SEQUENCE [LARGE SCALE GENOMIC DNA]</scope>
    <source>
        <strain>ATCC 700264 / AMB-1</strain>
    </source>
</reference>
<gene>
    <name evidence="1" type="primary">mnmA</name>
    <name type="ordered locus">amb3019</name>
</gene>
<protein>
    <recommendedName>
        <fullName evidence="1">tRNA-specific 2-thiouridylase MnmA</fullName>
        <ecNumber evidence="1">2.8.1.13</ecNumber>
    </recommendedName>
</protein>
<comment type="function">
    <text evidence="1">Catalyzes the 2-thiolation of uridine at the wobble position (U34) of tRNA, leading to the formation of s(2)U34.</text>
</comment>
<comment type="catalytic activity">
    <reaction evidence="1">
        <text>S-sulfanyl-L-cysteinyl-[protein] + uridine(34) in tRNA + AH2 + ATP = 2-thiouridine(34) in tRNA + L-cysteinyl-[protein] + A + AMP + diphosphate + H(+)</text>
        <dbReference type="Rhea" id="RHEA:47032"/>
        <dbReference type="Rhea" id="RHEA-COMP:10131"/>
        <dbReference type="Rhea" id="RHEA-COMP:11726"/>
        <dbReference type="Rhea" id="RHEA-COMP:11727"/>
        <dbReference type="Rhea" id="RHEA-COMP:11728"/>
        <dbReference type="ChEBI" id="CHEBI:13193"/>
        <dbReference type="ChEBI" id="CHEBI:15378"/>
        <dbReference type="ChEBI" id="CHEBI:17499"/>
        <dbReference type="ChEBI" id="CHEBI:29950"/>
        <dbReference type="ChEBI" id="CHEBI:30616"/>
        <dbReference type="ChEBI" id="CHEBI:33019"/>
        <dbReference type="ChEBI" id="CHEBI:61963"/>
        <dbReference type="ChEBI" id="CHEBI:65315"/>
        <dbReference type="ChEBI" id="CHEBI:87170"/>
        <dbReference type="ChEBI" id="CHEBI:456215"/>
        <dbReference type="EC" id="2.8.1.13"/>
    </reaction>
</comment>
<comment type="subcellular location">
    <subcellularLocation>
        <location evidence="1">Cytoplasm</location>
    </subcellularLocation>
</comment>
<comment type="similarity">
    <text evidence="1">Belongs to the MnmA/TRMU family.</text>
</comment>
<organism>
    <name type="scientific">Paramagnetospirillum magneticum (strain ATCC 700264 / AMB-1)</name>
    <name type="common">Magnetospirillum magneticum</name>
    <dbReference type="NCBI Taxonomy" id="342108"/>
    <lineage>
        <taxon>Bacteria</taxon>
        <taxon>Pseudomonadati</taxon>
        <taxon>Pseudomonadota</taxon>
        <taxon>Alphaproteobacteria</taxon>
        <taxon>Rhodospirillales</taxon>
        <taxon>Magnetospirillaceae</taxon>
        <taxon>Paramagnetospirillum</taxon>
    </lineage>
</organism>
<accession>Q2W2V2</accession>
<sequence>MNTLDIDKPPSSTRVVVAMSGGVDSSAVAALLKEQGYDVVGVTLQLYDLATSGIEPGACRPNTCCAGKDIHDARAVADALGIPHYVLDFEETFRRDVVERFAQTYLEARTPVPCIECNRTVKFRDLLGVAKDLGGDALATGHYVRRRPGVDGPELWTGRDPGRDQSYFLFATTRDQLDFLRFPLGDMAGKEETRAIAARHHLPVAAKRDSQDICFVPDGDYAALVTRLHPDAARPGEIVDTAGKVLGRHGGLIHYTIGQRRGLGLGGGPPLYVVALEPETGRVVVGSREDLNCLTIQVEAVNWLGGDETELRVAVKVRSTRPAAPALLRRLSGDRAQVILDHPEQGVAPGQACVFYQGERVLGGGWICPSREA</sequence>
<feature type="chain" id="PRO_0000349689" description="tRNA-specific 2-thiouridylase MnmA">
    <location>
        <begin position="1"/>
        <end position="373"/>
    </location>
</feature>
<feature type="region of interest" description="Interaction with tRNA" evidence="1">
    <location>
        <begin position="163"/>
        <end position="165"/>
    </location>
</feature>
<feature type="active site" description="Nucleophile" evidence="1">
    <location>
        <position position="117"/>
    </location>
</feature>
<feature type="active site" description="Cysteine persulfide intermediate" evidence="1">
    <location>
        <position position="214"/>
    </location>
</feature>
<feature type="binding site" evidence="1">
    <location>
        <begin position="18"/>
        <end position="25"/>
    </location>
    <ligand>
        <name>ATP</name>
        <dbReference type="ChEBI" id="CHEBI:30616"/>
    </ligand>
</feature>
<feature type="binding site" evidence="1">
    <location>
        <position position="44"/>
    </location>
    <ligand>
        <name>ATP</name>
        <dbReference type="ChEBI" id="CHEBI:30616"/>
    </ligand>
</feature>
<feature type="binding site" evidence="1">
    <location>
        <position position="141"/>
    </location>
    <ligand>
        <name>ATP</name>
        <dbReference type="ChEBI" id="CHEBI:30616"/>
    </ligand>
</feature>
<feature type="site" description="Interaction with tRNA" evidence="1">
    <location>
        <position position="142"/>
    </location>
</feature>
<feature type="site" description="Interaction with tRNA" evidence="1">
    <location>
        <position position="351"/>
    </location>
</feature>
<feature type="disulfide bond" description="Alternate" evidence="1">
    <location>
        <begin position="117"/>
        <end position="214"/>
    </location>
</feature>
<dbReference type="EC" id="2.8.1.13" evidence="1"/>
<dbReference type="EMBL" id="AP007255">
    <property type="protein sequence ID" value="BAE51823.1"/>
    <property type="molecule type" value="Genomic_DNA"/>
</dbReference>
<dbReference type="RefSeq" id="WP_011385395.1">
    <property type="nucleotide sequence ID" value="NC_007626.1"/>
</dbReference>
<dbReference type="SMR" id="Q2W2V2"/>
<dbReference type="STRING" id="342108.amb3019"/>
<dbReference type="KEGG" id="mag:amb3019"/>
<dbReference type="HOGENOM" id="CLU_035188_0_1_5"/>
<dbReference type="OrthoDB" id="9800696at2"/>
<dbReference type="Proteomes" id="UP000007058">
    <property type="component" value="Chromosome"/>
</dbReference>
<dbReference type="GO" id="GO:0005737">
    <property type="term" value="C:cytoplasm"/>
    <property type="evidence" value="ECO:0007669"/>
    <property type="project" value="UniProtKB-SubCell"/>
</dbReference>
<dbReference type="GO" id="GO:0005524">
    <property type="term" value="F:ATP binding"/>
    <property type="evidence" value="ECO:0007669"/>
    <property type="project" value="UniProtKB-KW"/>
</dbReference>
<dbReference type="GO" id="GO:0000049">
    <property type="term" value="F:tRNA binding"/>
    <property type="evidence" value="ECO:0007669"/>
    <property type="project" value="UniProtKB-KW"/>
</dbReference>
<dbReference type="GO" id="GO:0103016">
    <property type="term" value="F:tRNA-uridine 2-sulfurtransferase activity"/>
    <property type="evidence" value="ECO:0007669"/>
    <property type="project" value="UniProtKB-EC"/>
</dbReference>
<dbReference type="GO" id="GO:0002143">
    <property type="term" value="P:tRNA wobble position uridine thiolation"/>
    <property type="evidence" value="ECO:0007669"/>
    <property type="project" value="TreeGrafter"/>
</dbReference>
<dbReference type="CDD" id="cd01998">
    <property type="entry name" value="MnmA_TRMU-like"/>
    <property type="match status" value="1"/>
</dbReference>
<dbReference type="FunFam" id="2.30.30.280:FF:000001">
    <property type="entry name" value="tRNA-specific 2-thiouridylase MnmA"/>
    <property type="match status" value="1"/>
</dbReference>
<dbReference type="Gene3D" id="2.30.30.280">
    <property type="entry name" value="Adenine nucleotide alpha hydrolases-like domains"/>
    <property type="match status" value="1"/>
</dbReference>
<dbReference type="Gene3D" id="3.40.50.620">
    <property type="entry name" value="HUPs"/>
    <property type="match status" value="1"/>
</dbReference>
<dbReference type="Gene3D" id="2.40.30.10">
    <property type="entry name" value="Translation factors"/>
    <property type="match status" value="1"/>
</dbReference>
<dbReference type="HAMAP" id="MF_00144">
    <property type="entry name" value="tRNA_thiouridyl_MnmA"/>
    <property type="match status" value="1"/>
</dbReference>
<dbReference type="InterPro" id="IPR004506">
    <property type="entry name" value="MnmA-like"/>
</dbReference>
<dbReference type="InterPro" id="IPR046885">
    <property type="entry name" value="MnmA-like_C"/>
</dbReference>
<dbReference type="InterPro" id="IPR046884">
    <property type="entry name" value="MnmA-like_central"/>
</dbReference>
<dbReference type="InterPro" id="IPR023382">
    <property type="entry name" value="MnmA-like_central_sf"/>
</dbReference>
<dbReference type="InterPro" id="IPR014729">
    <property type="entry name" value="Rossmann-like_a/b/a_fold"/>
</dbReference>
<dbReference type="NCBIfam" id="NF001138">
    <property type="entry name" value="PRK00143.1"/>
    <property type="match status" value="1"/>
</dbReference>
<dbReference type="NCBIfam" id="TIGR00420">
    <property type="entry name" value="trmU"/>
    <property type="match status" value="1"/>
</dbReference>
<dbReference type="PANTHER" id="PTHR11933:SF5">
    <property type="entry name" value="MITOCHONDRIAL TRNA-SPECIFIC 2-THIOURIDYLASE 1"/>
    <property type="match status" value="1"/>
</dbReference>
<dbReference type="PANTHER" id="PTHR11933">
    <property type="entry name" value="TRNA 5-METHYLAMINOMETHYL-2-THIOURIDYLATE -METHYLTRANSFERASE"/>
    <property type="match status" value="1"/>
</dbReference>
<dbReference type="Pfam" id="PF03054">
    <property type="entry name" value="tRNA_Me_trans"/>
    <property type="match status" value="1"/>
</dbReference>
<dbReference type="Pfam" id="PF20258">
    <property type="entry name" value="tRNA_Me_trans_C"/>
    <property type="match status" value="1"/>
</dbReference>
<dbReference type="Pfam" id="PF20259">
    <property type="entry name" value="tRNA_Me_trans_M"/>
    <property type="match status" value="1"/>
</dbReference>
<dbReference type="SUPFAM" id="SSF52402">
    <property type="entry name" value="Adenine nucleotide alpha hydrolases-like"/>
    <property type="match status" value="1"/>
</dbReference>
<evidence type="ECO:0000255" key="1">
    <source>
        <dbReference type="HAMAP-Rule" id="MF_00144"/>
    </source>
</evidence>
<keyword id="KW-0067">ATP-binding</keyword>
<keyword id="KW-0963">Cytoplasm</keyword>
<keyword id="KW-1015">Disulfide bond</keyword>
<keyword id="KW-0547">Nucleotide-binding</keyword>
<keyword id="KW-0694">RNA-binding</keyword>
<keyword id="KW-0808">Transferase</keyword>
<keyword id="KW-0819">tRNA processing</keyword>
<keyword id="KW-0820">tRNA-binding</keyword>
<proteinExistence type="inferred from homology"/>